<accession>Q723G7</accession>
<sequence length="121" mass="13785">MIIVTNTIKVEKGAAEHVIRQFTGANGDGHPTKDIAEVEGFLGFELWHSKPEDKDYEEVVVTSKWESEEAQRNWVKSDSFKKAHGRTKDTREQREDRKGIVGNAIARFEVVHVQNPVIVEK</sequence>
<keyword id="KW-0963">Cytoplasm</keyword>
<keyword id="KW-0349">Heme</keyword>
<keyword id="KW-0408">Iron</keyword>
<keyword id="KW-0479">Metal-binding</keyword>
<keyword id="KW-0503">Monooxygenase</keyword>
<keyword id="KW-0560">Oxidoreductase</keyword>
<organism>
    <name type="scientific">Listeria monocytogenes serotype 4b (strain F2365)</name>
    <dbReference type="NCBI Taxonomy" id="265669"/>
    <lineage>
        <taxon>Bacteria</taxon>
        <taxon>Bacillati</taxon>
        <taxon>Bacillota</taxon>
        <taxon>Bacilli</taxon>
        <taxon>Bacillales</taxon>
        <taxon>Listeriaceae</taxon>
        <taxon>Listeria</taxon>
    </lineage>
</organism>
<dbReference type="EC" id="1.14.14.18" evidence="1"/>
<dbReference type="EMBL" id="AE017262">
    <property type="protein sequence ID" value="AAT03294.1"/>
    <property type="molecule type" value="Genomic_DNA"/>
</dbReference>
<dbReference type="RefSeq" id="WP_003721271.1">
    <property type="nucleotide sequence ID" value="NC_002973.6"/>
</dbReference>
<dbReference type="SMR" id="Q723G7"/>
<dbReference type="GeneID" id="93233935"/>
<dbReference type="KEGG" id="lmf:LMOf2365_0511"/>
<dbReference type="HOGENOM" id="CLU_141544_2_0_9"/>
<dbReference type="GO" id="GO:0005737">
    <property type="term" value="C:cytoplasm"/>
    <property type="evidence" value="ECO:0007669"/>
    <property type="project" value="UniProtKB-SubCell"/>
</dbReference>
<dbReference type="GO" id="GO:0020037">
    <property type="term" value="F:heme binding"/>
    <property type="evidence" value="ECO:0007669"/>
    <property type="project" value="UniProtKB-UniRule"/>
</dbReference>
<dbReference type="GO" id="GO:0004392">
    <property type="term" value="F:heme oxygenase (decyclizing) activity"/>
    <property type="evidence" value="ECO:0007669"/>
    <property type="project" value="UniProtKB-UniRule"/>
</dbReference>
<dbReference type="GO" id="GO:0005506">
    <property type="term" value="F:iron ion binding"/>
    <property type="evidence" value="ECO:0007669"/>
    <property type="project" value="UniProtKB-UniRule"/>
</dbReference>
<dbReference type="GO" id="GO:0042167">
    <property type="term" value="P:heme catabolic process"/>
    <property type="evidence" value="ECO:0007669"/>
    <property type="project" value="UniProtKB-UniRule"/>
</dbReference>
<dbReference type="GO" id="GO:0033212">
    <property type="term" value="P:iron import into cell"/>
    <property type="evidence" value="ECO:0007669"/>
    <property type="project" value="InterPro"/>
</dbReference>
<dbReference type="Gene3D" id="3.30.70.100">
    <property type="match status" value="1"/>
</dbReference>
<dbReference type="HAMAP" id="MF_01272">
    <property type="entry name" value="Heme_degrading_monooxygenase"/>
    <property type="match status" value="1"/>
</dbReference>
<dbReference type="InterPro" id="IPR007138">
    <property type="entry name" value="ABM_dom"/>
</dbReference>
<dbReference type="InterPro" id="IPR011008">
    <property type="entry name" value="Dimeric_a/b-barrel"/>
</dbReference>
<dbReference type="InterPro" id="IPR050404">
    <property type="entry name" value="Heme-degrading_MO"/>
</dbReference>
<dbReference type="InterPro" id="IPR023953">
    <property type="entry name" value="IsdG"/>
</dbReference>
<dbReference type="NCBIfam" id="NF009841">
    <property type="entry name" value="PRK13316.1"/>
    <property type="match status" value="1"/>
</dbReference>
<dbReference type="PANTHER" id="PTHR34474:SF4">
    <property type="entry name" value="HEME OXYGENASE (STAPHYLOBILIN-PRODUCING) 1"/>
    <property type="match status" value="1"/>
</dbReference>
<dbReference type="PANTHER" id="PTHR34474">
    <property type="entry name" value="SIGNAL TRANSDUCTION PROTEIN TRAP"/>
    <property type="match status" value="1"/>
</dbReference>
<dbReference type="Pfam" id="PF03992">
    <property type="entry name" value="ABM"/>
    <property type="match status" value="1"/>
</dbReference>
<dbReference type="SUPFAM" id="SSF54909">
    <property type="entry name" value="Dimeric alpha+beta barrel"/>
    <property type="match status" value="1"/>
</dbReference>
<dbReference type="PROSITE" id="PS51725">
    <property type="entry name" value="ABM"/>
    <property type="match status" value="1"/>
</dbReference>
<gene>
    <name evidence="1" type="primary">isdG</name>
    <name type="ordered locus">LMOf2365_0511</name>
</gene>
<proteinExistence type="inferred from homology"/>
<evidence type="ECO:0000255" key="1">
    <source>
        <dbReference type="HAMAP-Rule" id="MF_01272"/>
    </source>
</evidence>
<evidence type="ECO:0000256" key="2">
    <source>
        <dbReference type="SAM" id="MobiDB-lite"/>
    </source>
</evidence>
<name>HDOX_LISMF</name>
<feature type="chain" id="PRO_0000270079" description="Heme-degrading monooxygenase">
    <location>
        <begin position="1"/>
        <end position="121"/>
    </location>
</feature>
<feature type="domain" description="ABM" evidence="1">
    <location>
        <begin position="2"/>
        <end position="101"/>
    </location>
</feature>
<feature type="region of interest" description="Disordered" evidence="2">
    <location>
        <begin position="76"/>
        <end position="98"/>
    </location>
</feature>
<feature type="compositionally biased region" description="Basic and acidic residues" evidence="2">
    <location>
        <begin position="78"/>
        <end position="98"/>
    </location>
</feature>
<feature type="binding site" evidence="1">
    <location>
        <position position="6"/>
    </location>
    <ligand>
        <name>Fe cation</name>
        <dbReference type="ChEBI" id="CHEBI:24875"/>
    </ligand>
</feature>
<feature type="binding site" description="axial binding residue" evidence="1">
    <location>
        <position position="84"/>
    </location>
    <ligand>
        <name>heme</name>
        <dbReference type="ChEBI" id="CHEBI:30413"/>
    </ligand>
    <ligandPart>
        <name>Fe</name>
        <dbReference type="ChEBI" id="CHEBI:18248"/>
    </ligandPart>
</feature>
<feature type="site" description="Transition state stabilizer" evidence="1">
    <location>
        <position position="74"/>
    </location>
</feature>
<comment type="function">
    <text evidence="1">Allows bacterial pathogens to use the host heme as an iron source. Catalyzes the oxidative degradation of the heme macrocyclic porphyrin ring to the biliverdin in the presence of a suitable electron donor such as ascorbate or NADPH--cytochrome P450 reductase, with subsequent release of free iron.</text>
</comment>
<comment type="catalytic activity">
    <reaction evidence="1">
        <text>heme b + 3 reduced [NADPH--hemoprotein reductase] + 3 O2 = biliverdin IXalpha + CO + Fe(2+) + 3 oxidized [NADPH--hemoprotein reductase] + 3 H2O + H(+)</text>
        <dbReference type="Rhea" id="RHEA:21764"/>
        <dbReference type="Rhea" id="RHEA-COMP:11964"/>
        <dbReference type="Rhea" id="RHEA-COMP:11965"/>
        <dbReference type="ChEBI" id="CHEBI:15377"/>
        <dbReference type="ChEBI" id="CHEBI:15378"/>
        <dbReference type="ChEBI" id="CHEBI:15379"/>
        <dbReference type="ChEBI" id="CHEBI:17245"/>
        <dbReference type="ChEBI" id="CHEBI:29033"/>
        <dbReference type="ChEBI" id="CHEBI:57618"/>
        <dbReference type="ChEBI" id="CHEBI:57991"/>
        <dbReference type="ChEBI" id="CHEBI:58210"/>
        <dbReference type="ChEBI" id="CHEBI:60344"/>
        <dbReference type="EC" id="1.14.14.18"/>
    </reaction>
</comment>
<comment type="subunit">
    <text evidence="1">Homodimer.</text>
</comment>
<comment type="subcellular location">
    <subcellularLocation>
        <location evidence="1">Cytoplasm</location>
    </subcellularLocation>
</comment>
<comment type="similarity">
    <text evidence="1">Belongs to the antibiotic biosynthesis monooxygenase family. Heme-degrading monooxygenase IsdG subfamily.</text>
</comment>
<reference key="1">
    <citation type="journal article" date="2004" name="Nucleic Acids Res.">
        <title>Whole genome comparisons of serotype 4b and 1/2a strains of the food-borne pathogen Listeria monocytogenes reveal new insights into the core genome components of this species.</title>
        <authorList>
            <person name="Nelson K.E."/>
            <person name="Fouts D.E."/>
            <person name="Mongodin E.F."/>
            <person name="Ravel J."/>
            <person name="DeBoy R.T."/>
            <person name="Kolonay J.F."/>
            <person name="Rasko D.A."/>
            <person name="Angiuoli S.V."/>
            <person name="Gill S.R."/>
            <person name="Paulsen I.T."/>
            <person name="Peterson J.D."/>
            <person name="White O."/>
            <person name="Nelson W.C."/>
            <person name="Nierman W.C."/>
            <person name="Beanan M.J."/>
            <person name="Brinkac L.M."/>
            <person name="Daugherty S.C."/>
            <person name="Dodson R.J."/>
            <person name="Durkin A.S."/>
            <person name="Madupu R."/>
            <person name="Haft D.H."/>
            <person name="Selengut J."/>
            <person name="Van Aken S.E."/>
            <person name="Khouri H.M."/>
            <person name="Fedorova N."/>
            <person name="Forberger H.A."/>
            <person name="Tran B."/>
            <person name="Kathariou S."/>
            <person name="Wonderling L.D."/>
            <person name="Uhlich G.A."/>
            <person name="Bayles D.O."/>
            <person name="Luchansky J.B."/>
            <person name="Fraser C.M."/>
        </authorList>
    </citation>
    <scope>NUCLEOTIDE SEQUENCE [LARGE SCALE GENOMIC DNA]</scope>
    <source>
        <strain>F2365</strain>
    </source>
</reference>
<protein>
    <recommendedName>
        <fullName evidence="1">Heme-degrading monooxygenase</fullName>
        <ecNumber evidence="1">1.14.14.18</ecNumber>
    </recommendedName>
    <alternativeName>
        <fullName evidence="1">Heme oxygenase</fullName>
    </alternativeName>
    <alternativeName>
        <fullName evidence="1">Iron-regulated surface determinant</fullName>
    </alternativeName>
    <alternativeName>
        <fullName evidence="1">Iron-responsive surface determinant</fullName>
    </alternativeName>
</protein>